<evidence type="ECO:0000255" key="1">
    <source>
        <dbReference type="HAMAP-Rule" id="MF_01306"/>
    </source>
</evidence>
<evidence type="ECO:0000305" key="2"/>
<organism>
    <name type="scientific">Methanothermobacter thermautotrophicus (strain ATCC 29096 / DSM 1053 / JCM 10044 / NBRC 100330 / Delta H)</name>
    <name type="common">Methanobacterium thermoautotrophicum</name>
    <dbReference type="NCBI Taxonomy" id="187420"/>
    <lineage>
        <taxon>Archaea</taxon>
        <taxon>Methanobacteriati</taxon>
        <taxon>Methanobacteriota</taxon>
        <taxon>Methanomada group</taxon>
        <taxon>Methanobacteria</taxon>
        <taxon>Methanobacteriales</taxon>
        <taxon>Methanobacteriaceae</taxon>
        <taxon>Methanothermobacter</taxon>
    </lineage>
</organism>
<keyword id="KW-1185">Reference proteome</keyword>
<keyword id="KW-0687">Ribonucleoprotein</keyword>
<keyword id="KW-0689">Ribosomal protein</keyword>
<keyword id="KW-0694">RNA-binding</keyword>
<keyword id="KW-0699">rRNA-binding</keyword>
<accession>O26142</accession>
<proteinExistence type="inferred from homology"/>
<dbReference type="EMBL" id="AE000666">
    <property type="protein sequence ID" value="AAB84543.1"/>
    <property type="molecule type" value="Genomic_DNA"/>
</dbReference>
<dbReference type="PIR" id="A69145">
    <property type="entry name" value="A69145"/>
</dbReference>
<dbReference type="SMR" id="O26142"/>
<dbReference type="FunCoup" id="O26142">
    <property type="interactions" value="173"/>
</dbReference>
<dbReference type="STRING" id="187420.MTH_35"/>
<dbReference type="PaxDb" id="187420-MTH_35"/>
<dbReference type="EnsemblBacteria" id="AAB84543">
    <property type="protein sequence ID" value="AAB84543"/>
    <property type="gene ID" value="MTH_35"/>
</dbReference>
<dbReference type="KEGG" id="mth:MTH_35"/>
<dbReference type="PATRIC" id="fig|187420.15.peg.34"/>
<dbReference type="HOGENOM" id="CLU_089738_1_1_2"/>
<dbReference type="InParanoid" id="O26142"/>
<dbReference type="Proteomes" id="UP000005223">
    <property type="component" value="Chromosome"/>
</dbReference>
<dbReference type="GO" id="GO:0015935">
    <property type="term" value="C:small ribosomal subunit"/>
    <property type="evidence" value="ECO:0007669"/>
    <property type="project" value="InterPro"/>
</dbReference>
<dbReference type="GO" id="GO:0019843">
    <property type="term" value="F:rRNA binding"/>
    <property type="evidence" value="ECO:0007669"/>
    <property type="project" value="UniProtKB-UniRule"/>
</dbReference>
<dbReference type="GO" id="GO:0003735">
    <property type="term" value="F:structural constituent of ribosome"/>
    <property type="evidence" value="ECO:0007669"/>
    <property type="project" value="InterPro"/>
</dbReference>
<dbReference type="GO" id="GO:0042274">
    <property type="term" value="P:ribosomal small subunit biogenesis"/>
    <property type="evidence" value="ECO:0007669"/>
    <property type="project" value="TreeGrafter"/>
</dbReference>
<dbReference type="GO" id="GO:0006412">
    <property type="term" value="P:translation"/>
    <property type="evidence" value="ECO:0007669"/>
    <property type="project" value="UniProtKB-UniRule"/>
</dbReference>
<dbReference type="CDD" id="cd00165">
    <property type="entry name" value="S4"/>
    <property type="match status" value="1"/>
</dbReference>
<dbReference type="Gene3D" id="3.10.290.10">
    <property type="entry name" value="RNA-binding S4 domain"/>
    <property type="match status" value="1"/>
</dbReference>
<dbReference type="HAMAP" id="MF_01306_A">
    <property type="entry name" value="Ribosomal_uS4_A"/>
    <property type="match status" value="1"/>
</dbReference>
<dbReference type="InterPro" id="IPR022801">
    <property type="entry name" value="Ribosomal_uS4"/>
</dbReference>
<dbReference type="InterPro" id="IPR022802">
    <property type="entry name" value="Ribosomal_uS4_arc"/>
</dbReference>
<dbReference type="InterPro" id="IPR018079">
    <property type="entry name" value="Ribosomal_uS4_CS"/>
</dbReference>
<dbReference type="InterPro" id="IPR005710">
    <property type="entry name" value="Ribosomal_uS4_euk/arc"/>
</dbReference>
<dbReference type="InterPro" id="IPR001912">
    <property type="entry name" value="Ribosomal_uS4_N"/>
</dbReference>
<dbReference type="InterPro" id="IPR002942">
    <property type="entry name" value="S4_RNA-bd"/>
</dbReference>
<dbReference type="InterPro" id="IPR036986">
    <property type="entry name" value="S4_RNA-bd_sf"/>
</dbReference>
<dbReference type="NCBIfam" id="NF003139">
    <property type="entry name" value="PRK04051.1"/>
    <property type="match status" value="1"/>
</dbReference>
<dbReference type="NCBIfam" id="TIGR01018">
    <property type="entry name" value="uS4_arch"/>
    <property type="match status" value="1"/>
</dbReference>
<dbReference type="PANTHER" id="PTHR11831">
    <property type="entry name" value="30S 40S RIBOSOMAL PROTEIN"/>
    <property type="match status" value="1"/>
</dbReference>
<dbReference type="PANTHER" id="PTHR11831:SF5">
    <property type="entry name" value="40S RIBOSOMAL PROTEIN S9"/>
    <property type="match status" value="1"/>
</dbReference>
<dbReference type="Pfam" id="PF00163">
    <property type="entry name" value="Ribosomal_S4"/>
    <property type="match status" value="1"/>
</dbReference>
<dbReference type="Pfam" id="PF01479">
    <property type="entry name" value="S4"/>
    <property type="match status" value="1"/>
</dbReference>
<dbReference type="SMART" id="SM01390">
    <property type="entry name" value="Ribosomal_S4"/>
    <property type="match status" value="1"/>
</dbReference>
<dbReference type="SMART" id="SM00363">
    <property type="entry name" value="S4"/>
    <property type="match status" value="1"/>
</dbReference>
<dbReference type="SUPFAM" id="SSF55174">
    <property type="entry name" value="Alpha-L RNA-binding motif"/>
    <property type="match status" value="1"/>
</dbReference>
<dbReference type="PROSITE" id="PS00632">
    <property type="entry name" value="RIBOSOMAL_S4"/>
    <property type="match status" value="1"/>
</dbReference>
<dbReference type="PROSITE" id="PS50889">
    <property type="entry name" value="S4"/>
    <property type="match status" value="1"/>
</dbReference>
<protein>
    <recommendedName>
        <fullName evidence="1">Small ribosomal subunit protein uS4</fullName>
    </recommendedName>
    <alternativeName>
        <fullName evidence="2">30S ribosomal protein S4</fullName>
    </alternativeName>
</protein>
<gene>
    <name evidence="1" type="primary">rps4</name>
    <name type="ordered locus">MTH_35</name>
</gene>
<feature type="chain" id="PRO_0000132512" description="Small ribosomal subunit protein uS4">
    <location>
        <begin position="1"/>
        <end position="171"/>
    </location>
</feature>
<feature type="domain" description="S4 RNA-binding" evidence="1">
    <location>
        <begin position="103"/>
        <end position="167"/>
    </location>
</feature>
<comment type="function">
    <text evidence="1">One of the primary rRNA binding proteins, it binds directly to 16S rRNA where it nucleates assembly of the body of the 30S subunit.</text>
</comment>
<comment type="function">
    <text evidence="1">With S5 and S12 plays an important role in translational accuracy.</text>
</comment>
<comment type="subunit">
    <text evidence="1">Part of the 30S ribosomal subunit. Contacts protein S5. The interaction surface between S4 and S5 is involved in control of translational fidelity.</text>
</comment>
<comment type="similarity">
    <text evidence="1">Belongs to the universal ribosomal protein uS4 family.</text>
</comment>
<reference key="1">
    <citation type="journal article" date="1997" name="J. Bacteriol.">
        <title>Complete genome sequence of Methanobacterium thermoautotrophicum deltaH: functional analysis and comparative genomics.</title>
        <authorList>
            <person name="Smith D.R."/>
            <person name="Doucette-Stamm L.A."/>
            <person name="Deloughery C."/>
            <person name="Lee H.-M."/>
            <person name="Dubois J."/>
            <person name="Aldredge T."/>
            <person name="Bashirzadeh R."/>
            <person name="Blakely D."/>
            <person name="Cook R."/>
            <person name="Gilbert K."/>
            <person name="Harrison D."/>
            <person name="Hoang L."/>
            <person name="Keagle P."/>
            <person name="Lumm W."/>
            <person name="Pothier B."/>
            <person name="Qiu D."/>
            <person name="Spadafora R."/>
            <person name="Vicare R."/>
            <person name="Wang Y."/>
            <person name="Wierzbowski J."/>
            <person name="Gibson R."/>
            <person name="Jiwani N."/>
            <person name="Caruso A."/>
            <person name="Bush D."/>
            <person name="Safer H."/>
            <person name="Patwell D."/>
            <person name="Prabhakar S."/>
            <person name="McDougall S."/>
            <person name="Shimer G."/>
            <person name="Goyal A."/>
            <person name="Pietrovski S."/>
            <person name="Church G.M."/>
            <person name="Daniels C.J."/>
            <person name="Mao J.-I."/>
            <person name="Rice P."/>
            <person name="Noelling J."/>
            <person name="Reeve J.N."/>
        </authorList>
    </citation>
    <scope>NUCLEOTIDE SEQUENCE [LARGE SCALE GENOMIC DNA]</scope>
    <source>
        <strain>ATCC 29096 / DSM 1053 / JCM 10044 / NBRC 100330 / Delta H</strain>
    </source>
</reference>
<sequence>MGHPRKARKKYDTPPHPWNAERIKEENRLVAKYGLKNKKEVWKAETMVRRYRRDARYLLGMASEHTGKEREQLLGHLVRTGILNEGAKLEDVLDLTVEDVLRRRLQTLVHKRGLARTVKEARQMVIHGHIALDGRKIDAPGYIVKRGEEDKIGFYPSSPMKKQIEAAQDAE</sequence>
<name>RS4_METTH</name>